<organism>
    <name type="scientific">Helicobacter acinonychis (strain Sheeba)</name>
    <dbReference type="NCBI Taxonomy" id="382638"/>
    <lineage>
        <taxon>Bacteria</taxon>
        <taxon>Pseudomonadati</taxon>
        <taxon>Campylobacterota</taxon>
        <taxon>Epsilonproteobacteria</taxon>
        <taxon>Campylobacterales</taxon>
        <taxon>Helicobacteraceae</taxon>
        <taxon>Helicobacter</taxon>
    </lineage>
</organism>
<feature type="chain" id="PRO_0000377183" description="tRNA dimethylallyltransferase">
    <location>
        <begin position="1"/>
        <end position="266"/>
    </location>
</feature>
<feature type="site" description="Interaction with substrate tRNA" evidence="1">
    <location>
        <position position="63"/>
    </location>
</feature>
<proteinExistence type="inferred from homology"/>
<dbReference type="EC" id="2.5.1.75"/>
<dbReference type="EMBL" id="AM260522">
    <property type="protein sequence ID" value="CAJ98890.1"/>
    <property type="molecule type" value="Genomic_DNA"/>
</dbReference>
<dbReference type="SMR" id="Q17ZN6"/>
<dbReference type="STRING" id="382638.Hac_0022"/>
<dbReference type="KEGG" id="hac:Hac_0022"/>
<dbReference type="eggNOG" id="COG0324">
    <property type="taxonomic scope" value="Bacteria"/>
</dbReference>
<dbReference type="HOGENOM" id="CLU_032616_0_1_7"/>
<dbReference type="Proteomes" id="UP000000775">
    <property type="component" value="Chromosome"/>
</dbReference>
<dbReference type="GO" id="GO:0005524">
    <property type="term" value="F:ATP binding"/>
    <property type="evidence" value="ECO:0007669"/>
    <property type="project" value="UniProtKB-KW"/>
</dbReference>
<dbReference type="GO" id="GO:0052381">
    <property type="term" value="F:tRNA dimethylallyltransferase activity"/>
    <property type="evidence" value="ECO:0007669"/>
    <property type="project" value="UniProtKB-EC"/>
</dbReference>
<dbReference type="GO" id="GO:0006400">
    <property type="term" value="P:tRNA modification"/>
    <property type="evidence" value="ECO:0007669"/>
    <property type="project" value="TreeGrafter"/>
</dbReference>
<dbReference type="Gene3D" id="1.10.20.140">
    <property type="match status" value="1"/>
</dbReference>
<dbReference type="Gene3D" id="3.40.50.300">
    <property type="entry name" value="P-loop containing nucleotide triphosphate hydrolases"/>
    <property type="match status" value="1"/>
</dbReference>
<dbReference type="InterPro" id="IPR039657">
    <property type="entry name" value="Dimethylallyltransferase"/>
</dbReference>
<dbReference type="InterPro" id="IPR018022">
    <property type="entry name" value="IPT"/>
</dbReference>
<dbReference type="InterPro" id="IPR027417">
    <property type="entry name" value="P-loop_NTPase"/>
</dbReference>
<dbReference type="NCBIfam" id="TIGR00174">
    <property type="entry name" value="miaA"/>
    <property type="match status" value="1"/>
</dbReference>
<dbReference type="PANTHER" id="PTHR11088">
    <property type="entry name" value="TRNA DIMETHYLALLYLTRANSFERASE"/>
    <property type="match status" value="1"/>
</dbReference>
<dbReference type="PANTHER" id="PTHR11088:SF60">
    <property type="entry name" value="TRNA DIMETHYLALLYLTRANSFERASE"/>
    <property type="match status" value="1"/>
</dbReference>
<dbReference type="Pfam" id="PF01715">
    <property type="entry name" value="IPPT"/>
    <property type="match status" value="1"/>
</dbReference>
<reference key="1">
    <citation type="journal article" date="2006" name="PLoS Genet.">
        <title>Who ate whom? Adaptive Helicobacter genomic changes that accompanied a host jump from early humans to large felines.</title>
        <authorList>
            <person name="Eppinger M."/>
            <person name="Baar C."/>
            <person name="Linz B."/>
            <person name="Raddatz G."/>
            <person name="Lanz C."/>
            <person name="Keller H."/>
            <person name="Morelli G."/>
            <person name="Gressmann H."/>
            <person name="Achtman M."/>
            <person name="Schuster S.C."/>
        </authorList>
    </citation>
    <scope>NUCLEOTIDE SEQUENCE [LARGE SCALE GENOMIC DNA]</scope>
    <source>
        <strain>Sheeba</strain>
    </source>
</reference>
<name>MIAA_HELAH</name>
<accession>Q17ZN6</accession>
<gene>
    <name type="primary">miaA</name>
    <name type="ordered locus">Hac_0022</name>
</gene>
<protein>
    <recommendedName>
        <fullName>tRNA dimethylallyltransferase</fullName>
        <ecNumber>2.5.1.75</ecNumber>
    </recommendedName>
    <alternativeName>
        <fullName>Dimethylallyl diphosphate:tRNA dimethylallyltransferase</fullName>
        <shortName>DMAPP:tRNA dimethylallyltransferase</shortName>
        <shortName>DMATase</shortName>
    </alternativeName>
    <alternativeName>
        <fullName>Isopentenyl-diphosphate:tRNA isopentenyltransferase</fullName>
        <shortName>IPP transferase</shortName>
        <shortName>IPPT</shortName>
        <shortName>IPTase</shortName>
    </alternativeName>
</protein>
<sequence>MSIYKDINIASAKPSLKERKNIKHYALDCLNIDEKNNAPLFKTLLEDAMKVSQKEILLIVGGSSFYLKSILEGLSSMPKLNNDQILKIEREIATLTNPYAFLKSIDPNMAFKIHSNDTYRIHKALEIFYATHTPPSEYFKKNPKKPFEHAITLFALCIEKTVLHNRIKQRTKNMLDCGLIEEIKALYTQYPKDSQPFKAIGVKESILYLEKQLTLKELEEAIVSNTIKLAKRQNTFNKTQFNNLYVGSVEEVRHAILKRSKSGIKE</sequence>
<keyword id="KW-0067">ATP-binding</keyword>
<keyword id="KW-0460">Magnesium</keyword>
<keyword id="KW-0547">Nucleotide-binding</keyword>
<keyword id="KW-0808">Transferase</keyword>
<keyword id="KW-0819">tRNA processing</keyword>
<evidence type="ECO:0000250" key="1"/>
<evidence type="ECO:0000305" key="2"/>
<comment type="function">
    <text evidence="1">Catalyzes the transfer of a dimethylallyl group onto the adenine at position 37 in tRNAs that read codons beginning with uridine, leading to the formation of N6-(dimethylallyl)adenosine (i(6)A).</text>
</comment>
<comment type="catalytic activity">
    <reaction>
        <text>adenosine(37) in tRNA + dimethylallyl diphosphate = N(6)-dimethylallyladenosine(37) in tRNA + diphosphate</text>
        <dbReference type="Rhea" id="RHEA:26482"/>
        <dbReference type="Rhea" id="RHEA-COMP:10162"/>
        <dbReference type="Rhea" id="RHEA-COMP:10375"/>
        <dbReference type="ChEBI" id="CHEBI:33019"/>
        <dbReference type="ChEBI" id="CHEBI:57623"/>
        <dbReference type="ChEBI" id="CHEBI:74411"/>
        <dbReference type="ChEBI" id="CHEBI:74415"/>
        <dbReference type="EC" id="2.5.1.75"/>
    </reaction>
</comment>
<comment type="cofactor">
    <cofactor evidence="1">
        <name>Mg(2+)</name>
        <dbReference type="ChEBI" id="CHEBI:18420"/>
    </cofactor>
</comment>
<comment type="subunit">
    <text evidence="1">Monomer.</text>
</comment>
<comment type="similarity">
    <text evidence="2">Belongs to the IPP transferase family.</text>
</comment>